<sequence>MTDRVSAGNLRVARVLYDFVNNEALPGTDIDQDSFWAGVDKVVTDLTPQNQDLLKTRDDLQAQIDKWHRHRVIEPLDPQAYREFLTEIGYLLPAPEDFTITTSGVDDEITTTAGPQLVVPILNARFALNAANARWGSLYDALYGTDVISESDGAEKGRGYNKVRGDKVIAYARQFLDDSVPLAGASYTDATGFKVEDGQLVVSLADTSAALADPGQFAGYTGTAENPKSILLANHGLHIEILIDPESQIGATDGAGVKDVILESAITTIMDFEDSVAAVDADDKVLGYRNWLGLNRGDLSEDVTKDDKTFTRVLNTDRTYTAPHGGELTLPGRSLLFVRNVGHLMTNDAIVSDAEGAEGAPVFEGIMDALFTGLIAIHGLRSTDANGLLTNSRTGSIYIVKPKMHGPAEVAFTCELFSRVEDVLGLPQGTMKVGIMDEERRTTLNLKACIKAAADRVVFINTGFLDRTGDEIHTSMEAGPMIRKGAMKNTAWIKAYEDANVDTGLAAGFSGKAQIGKGMWAMTELMADMVEQKIAQPKAGATTAWVPSPTAATLHAMHYHKVDVFAVQKELQGKTRTSVDELLTIPLAKELAWAPEEIREEVDNNCQSILGYVVRWIDQGVGCSKVPDIHNVALMEDRATLRISSQLLANWLRHGVITSEDARASLERMAPLVDKQNAGDPEYHAMAPNFDDSIAFLAAQDLILSGAQQPNGYTEPILHRRRRELKARAGA</sequence>
<feature type="chain" id="PRO_1000130893" description="Malate synthase G">
    <location>
        <begin position="1"/>
        <end position="731"/>
    </location>
</feature>
<feature type="active site" description="Proton acceptor" evidence="1">
    <location>
        <position position="339"/>
    </location>
</feature>
<feature type="active site" description="Proton donor" evidence="1">
    <location>
        <position position="637"/>
    </location>
</feature>
<feature type="binding site" evidence="1">
    <location>
        <position position="118"/>
    </location>
    <ligand>
        <name>acetyl-CoA</name>
        <dbReference type="ChEBI" id="CHEBI:57288"/>
    </ligand>
</feature>
<feature type="binding site" evidence="1">
    <location>
        <begin position="125"/>
        <end position="126"/>
    </location>
    <ligand>
        <name>acetyl-CoA</name>
        <dbReference type="ChEBI" id="CHEBI:57288"/>
    </ligand>
</feature>
<feature type="binding site" evidence="1">
    <location>
        <position position="275"/>
    </location>
    <ligand>
        <name>acetyl-CoA</name>
        <dbReference type="ChEBI" id="CHEBI:57288"/>
    </ligand>
</feature>
<feature type="binding site" evidence="1">
    <location>
        <position position="312"/>
    </location>
    <ligand>
        <name>acetyl-CoA</name>
        <dbReference type="ChEBI" id="CHEBI:57288"/>
    </ligand>
</feature>
<feature type="binding site" evidence="1">
    <location>
        <position position="339"/>
    </location>
    <ligand>
        <name>glyoxylate</name>
        <dbReference type="ChEBI" id="CHEBI:36655"/>
    </ligand>
</feature>
<feature type="binding site" evidence="1">
    <location>
        <position position="438"/>
    </location>
    <ligand>
        <name>glyoxylate</name>
        <dbReference type="ChEBI" id="CHEBI:36655"/>
    </ligand>
</feature>
<feature type="binding site" evidence="1">
    <location>
        <position position="438"/>
    </location>
    <ligand>
        <name>Mg(2+)</name>
        <dbReference type="ChEBI" id="CHEBI:18420"/>
    </ligand>
</feature>
<feature type="binding site" evidence="1">
    <location>
        <begin position="463"/>
        <end position="466"/>
    </location>
    <ligand>
        <name>glyoxylate</name>
        <dbReference type="ChEBI" id="CHEBI:36655"/>
    </ligand>
</feature>
<feature type="binding site" evidence="1">
    <location>
        <position position="466"/>
    </location>
    <ligand>
        <name>Mg(2+)</name>
        <dbReference type="ChEBI" id="CHEBI:18420"/>
    </ligand>
</feature>
<feature type="binding site" evidence="1">
    <location>
        <position position="547"/>
    </location>
    <ligand>
        <name>acetyl-CoA</name>
        <dbReference type="ChEBI" id="CHEBI:57288"/>
    </ligand>
</feature>
<feature type="modified residue" description="Cysteine sulfenic acid (-SOH)" evidence="1">
    <location>
        <position position="623"/>
    </location>
</feature>
<feature type="strand" evidence="2">
    <location>
        <begin position="4"/>
        <end position="7"/>
    </location>
</feature>
<feature type="strand" evidence="2">
    <location>
        <begin position="10"/>
        <end position="13"/>
    </location>
</feature>
<feature type="helix" evidence="2">
    <location>
        <begin position="14"/>
        <end position="22"/>
    </location>
</feature>
<feature type="helix" evidence="2">
    <location>
        <begin position="32"/>
        <end position="69"/>
    </location>
</feature>
<feature type="strand" evidence="2">
    <location>
        <begin position="72"/>
        <end position="74"/>
    </location>
</feature>
<feature type="helix" evidence="2">
    <location>
        <begin position="78"/>
        <end position="87"/>
    </location>
</feature>
<feature type="helix" evidence="2">
    <location>
        <begin position="107"/>
        <end position="110"/>
    </location>
</feature>
<feature type="strand" evidence="2">
    <location>
        <begin position="116"/>
        <end position="120"/>
    </location>
</feature>
<feature type="helix" evidence="2">
    <location>
        <begin position="124"/>
        <end position="131"/>
    </location>
</feature>
<feature type="helix" evidence="2">
    <location>
        <begin position="132"/>
        <end position="134"/>
    </location>
</feature>
<feature type="strand" evidence="2">
    <location>
        <begin position="135"/>
        <end position="137"/>
    </location>
</feature>
<feature type="helix" evidence="2">
    <location>
        <begin position="138"/>
        <end position="143"/>
    </location>
</feature>
<feature type="turn" evidence="2">
    <location>
        <begin position="151"/>
        <end position="153"/>
    </location>
</feature>
<feature type="helix" evidence="2">
    <location>
        <begin position="162"/>
        <end position="179"/>
    </location>
</feature>
<feature type="helix" evidence="2">
    <location>
        <begin position="187"/>
        <end position="189"/>
    </location>
</feature>
<feature type="strand" evidence="2">
    <location>
        <begin position="192"/>
        <end position="196"/>
    </location>
</feature>
<feature type="strand" evidence="2">
    <location>
        <begin position="199"/>
        <end position="203"/>
    </location>
</feature>
<feature type="strand" evidence="2">
    <location>
        <begin position="205"/>
        <end position="209"/>
    </location>
</feature>
<feature type="strand" evidence="2">
    <location>
        <begin position="211"/>
        <end position="213"/>
    </location>
</feature>
<feature type="helix" evidence="2">
    <location>
        <begin position="214"/>
        <end position="216"/>
    </location>
</feature>
<feature type="strand" evidence="2">
    <location>
        <begin position="217"/>
        <end position="222"/>
    </location>
</feature>
<feature type="strand" evidence="2">
    <location>
        <begin position="224"/>
        <end position="234"/>
    </location>
</feature>
<feature type="strand" evidence="2">
    <location>
        <begin position="237"/>
        <end position="243"/>
    </location>
</feature>
<feature type="helix" evidence="2">
    <location>
        <begin position="250"/>
        <end position="252"/>
    </location>
</feature>
<feature type="strand" evidence="2">
    <location>
        <begin position="257"/>
        <end position="263"/>
    </location>
</feature>
<feature type="strand" evidence="2">
    <location>
        <begin position="267"/>
        <end position="273"/>
    </location>
</feature>
<feature type="helix" evidence="2">
    <location>
        <begin position="281"/>
        <end position="296"/>
    </location>
</feature>
<feature type="strand" evidence="2">
    <location>
        <begin position="301"/>
        <end position="304"/>
    </location>
</feature>
<feature type="strand" evidence="2">
    <location>
        <begin position="309"/>
        <end position="312"/>
    </location>
</feature>
<feature type="strand" evidence="2">
    <location>
        <begin position="318"/>
        <end position="321"/>
    </location>
</feature>
<feature type="strand" evidence="2">
    <location>
        <begin position="325"/>
        <end position="330"/>
    </location>
</feature>
<feature type="strand" evidence="2">
    <location>
        <begin position="335"/>
        <end position="339"/>
    </location>
</feature>
<feature type="strand" evidence="2">
    <location>
        <begin position="346"/>
        <end position="352"/>
    </location>
</feature>
<feature type="strand" evidence="2">
    <location>
        <begin position="358"/>
        <end position="363"/>
    </location>
</feature>
<feature type="helix" evidence="2">
    <location>
        <begin position="364"/>
        <end position="376"/>
    </location>
</feature>
<feature type="helix" evidence="2">
    <location>
        <begin position="377"/>
        <end position="380"/>
    </location>
</feature>
<feature type="turn" evidence="2">
    <location>
        <begin position="384"/>
        <end position="386"/>
    </location>
</feature>
<feature type="strand" evidence="2">
    <location>
        <begin position="393"/>
        <end position="395"/>
    </location>
</feature>
<feature type="strand" evidence="2">
    <location>
        <begin position="397"/>
        <end position="401"/>
    </location>
</feature>
<feature type="helix" evidence="2">
    <location>
        <begin position="407"/>
        <end position="424"/>
    </location>
</feature>
<feature type="strand" evidence="2">
    <location>
        <begin position="431"/>
        <end position="437"/>
    </location>
</feature>
<feature type="helix" evidence="2">
    <location>
        <begin position="440"/>
        <end position="443"/>
    </location>
</feature>
<feature type="helix" evidence="2">
    <location>
        <begin position="446"/>
        <end position="452"/>
    </location>
</feature>
<feature type="turn" evidence="2">
    <location>
        <begin position="453"/>
        <end position="456"/>
    </location>
</feature>
<feature type="strand" evidence="2">
    <location>
        <begin position="457"/>
        <end position="462"/>
    </location>
</feature>
<feature type="helix" evidence="2">
    <location>
        <begin position="464"/>
        <end position="474"/>
    </location>
</feature>
<feature type="helix" evidence="2">
    <location>
        <begin position="476"/>
        <end position="478"/>
    </location>
</feature>
<feature type="helix" evidence="2">
    <location>
        <begin position="484"/>
        <end position="489"/>
    </location>
</feature>
<feature type="helix" evidence="2">
    <location>
        <begin position="491"/>
        <end position="506"/>
    </location>
</feature>
<feature type="turn" evidence="2">
    <location>
        <begin position="510"/>
        <end position="512"/>
    </location>
</feature>
<feature type="strand" evidence="2">
    <location>
        <begin position="513"/>
        <end position="517"/>
    </location>
</feature>
<feature type="helix" evidence="2">
    <location>
        <begin position="526"/>
        <end position="532"/>
    </location>
</feature>
<feature type="helix" evidence="2">
    <location>
        <begin position="535"/>
        <end position="538"/>
    </location>
</feature>
<feature type="strand" evidence="2">
    <location>
        <begin position="542"/>
        <end position="548"/>
    </location>
</feature>
<feature type="helix" evidence="2">
    <location>
        <begin position="549"/>
        <end position="561"/>
    </location>
</feature>
<feature type="helix" evidence="2">
    <location>
        <begin position="564"/>
        <end position="571"/>
    </location>
</feature>
<feature type="helix" evidence="2">
    <location>
        <begin position="579"/>
        <end position="582"/>
    </location>
</feature>
<feature type="helix" evidence="2">
    <location>
        <begin position="595"/>
        <end position="619"/>
    </location>
</feature>
<feature type="strand" evidence="2">
    <location>
        <begin position="624"/>
        <end position="627"/>
    </location>
</feature>
<feature type="strand" evidence="2">
    <location>
        <begin position="633"/>
        <end position="636"/>
    </location>
</feature>
<feature type="helix" evidence="2">
    <location>
        <begin position="638"/>
        <end position="653"/>
    </location>
</feature>
<feature type="helix" evidence="2">
    <location>
        <begin position="659"/>
        <end position="676"/>
    </location>
</feature>
<feature type="turn" evidence="2">
    <location>
        <begin position="677"/>
        <end position="679"/>
    </location>
</feature>
<feature type="helix" evidence="2">
    <location>
        <begin position="690"/>
        <end position="692"/>
    </location>
</feature>
<feature type="helix" evidence="2">
    <location>
        <begin position="694"/>
        <end position="704"/>
    </location>
</feature>
<feature type="helix" evidence="2">
    <location>
        <begin position="706"/>
        <end position="708"/>
    </location>
</feature>
<feature type="helix" evidence="2">
    <location>
        <begin position="710"/>
        <end position="712"/>
    </location>
</feature>
<feature type="helix" evidence="2">
    <location>
        <begin position="715"/>
        <end position="729"/>
    </location>
</feature>
<keyword id="KW-0002">3D-structure</keyword>
<keyword id="KW-0963">Cytoplasm</keyword>
<keyword id="KW-0329">Glyoxylate bypass</keyword>
<keyword id="KW-0460">Magnesium</keyword>
<keyword id="KW-0479">Metal-binding</keyword>
<keyword id="KW-0558">Oxidation</keyword>
<keyword id="KW-1185">Reference proteome</keyword>
<keyword id="KW-0808">Transferase</keyword>
<keyword id="KW-0816">Tricarboxylic acid cycle</keyword>
<comment type="function">
    <text evidence="1">Involved in the glycolate utilization. Catalyzes the condensation and subsequent hydrolysis of acetyl-coenzyme A (acetyl-CoA) and glyoxylate to form malate and CoA.</text>
</comment>
<comment type="catalytic activity">
    <reaction evidence="1">
        <text>glyoxylate + acetyl-CoA + H2O = (S)-malate + CoA + H(+)</text>
        <dbReference type="Rhea" id="RHEA:18181"/>
        <dbReference type="ChEBI" id="CHEBI:15377"/>
        <dbReference type="ChEBI" id="CHEBI:15378"/>
        <dbReference type="ChEBI" id="CHEBI:15589"/>
        <dbReference type="ChEBI" id="CHEBI:36655"/>
        <dbReference type="ChEBI" id="CHEBI:57287"/>
        <dbReference type="ChEBI" id="CHEBI:57288"/>
        <dbReference type="EC" id="2.3.3.9"/>
    </reaction>
</comment>
<comment type="cofactor">
    <cofactor evidence="1">
        <name>Mg(2+)</name>
        <dbReference type="ChEBI" id="CHEBI:18420"/>
    </cofactor>
</comment>
<comment type="pathway">
    <text evidence="1">Carbohydrate metabolism; glyoxylate cycle; (S)-malate from isocitrate: step 2/2.</text>
</comment>
<comment type="subunit">
    <text evidence="1">Monomer.</text>
</comment>
<comment type="subcellular location">
    <subcellularLocation>
        <location evidence="1">Cytoplasm</location>
    </subcellularLocation>
</comment>
<comment type="similarity">
    <text evidence="1">Belongs to the malate synthase family. GlcB subfamily.</text>
</comment>
<name>MASZ_MYCMM</name>
<evidence type="ECO:0000255" key="1">
    <source>
        <dbReference type="HAMAP-Rule" id="MF_00641"/>
    </source>
</evidence>
<evidence type="ECO:0007829" key="2">
    <source>
        <dbReference type="PDB" id="6AXE"/>
    </source>
</evidence>
<gene>
    <name evidence="1" type="primary">glcB</name>
    <name type="ordered locus">MMAR_2713</name>
</gene>
<accession>B2HSY2</accession>
<dbReference type="EC" id="2.3.3.9" evidence="1"/>
<dbReference type="EMBL" id="CP000854">
    <property type="protein sequence ID" value="ACC41156.1"/>
    <property type="molecule type" value="Genomic_DNA"/>
</dbReference>
<dbReference type="RefSeq" id="WP_012394427.1">
    <property type="nucleotide sequence ID" value="NC_010612.1"/>
</dbReference>
<dbReference type="PDB" id="6AXE">
    <property type="method" value="X-ray"/>
    <property type="resolution" value="1.60 A"/>
    <property type="chains" value="A/B=1-731"/>
</dbReference>
<dbReference type="PDBsum" id="6AXE"/>
<dbReference type="SMR" id="B2HSY2"/>
<dbReference type="STRING" id="216594.MMAR_2713"/>
<dbReference type="KEGG" id="mmi:MMAR_2713"/>
<dbReference type="eggNOG" id="COG2225">
    <property type="taxonomic scope" value="Bacteria"/>
</dbReference>
<dbReference type="HOGENOM" id="CLU_028446_1_0_11"/>
<dbReference type="OrthoDB" id="9762054at2"/>
<dbReference type="UniPathway" id="UPA00703">
    <property type="reaction ID" value="UER00720"/>
</dbReference>
<dbReference type="Proteomes" id="UP000001190">
    <property type="component" value="Chromosome"/>
</dbReference>
<dbReference type="GO" id="GO:0005829">
    <property type="term" value="C:cytosol"/>
    <property type="evidence" value="ECO:0007669"/>
    <property type="project" value="TreeGrafter"/>
</dbReference>
<dbReference type="GO" id="GO:0000287">
    <property type="term" value="F:magnesium ion binding"/>
    <property type="evidence" value="ECO:0007669"/>
    <property type="project" value="TreeGrafter"/>
</dbReference>
<dbReference type="GO" id="GO:0004474">
    <property type="term" value="F:malate synthase activity"/>
    <property type="evidence" value="ECO:0007669"/>
    <property type="project" value="UniProtKB-UniRule"/>
</dbReference>
<dbReference type="GO" id="GO:0009436">
    <property type="term" value="P:glyoxylate catabolic process"/>
    <property type="evidence" value="ECO:0007669"/>
    <property type="project" value="TreeGrafter"/>
</dbReference>
<dbReference type="GO" id="GO:0006097">
    <property type="term" value="P:glyoxylate cycle"/>
    <property type="evidence" value="ECO:0007669"/>
    <property type="project" value="UniProtKB-UniRule"/>
</dbReference>
<dbReference type="GO" id="GO:0006099">
    <property type="term" value="P:tricarboxylic acid cycle"/>
    <property type="evidence" value="ECO:0007669"/>
    <property type="project" value="UniProtKB-KW"/>
</dbReference>
<dbReference type="CDD" id="cd00728">
    <property type="entry name" value="malate_synt_G"/>
    <property type="match status" value="1"/>
</dbReference>
<dbReference type="FunFam" id="3.20.20.360:FF:000002">
    <property type="entry name" value="Malate synthase G"/>
    <property type="match status" value="1"/>
</dbReference>
<dbReference type="Gene3D" id="3.20.20.360">
    <property type="entry name" value="Malate synthase, domain 3"/>
    <property type="match status" value="2"/>
</dbReference>
<dbReference type="Gene3D" id="1.20.1220.12">
    <property type="entry name" value="Malate synthase, domain III"/>
    <property type="match status" value="1"/>
</dbReference>
<dbReference type="HAMAP" id="MF_00641">
    <property type="entry name" value="Malate_synth_G"/>
    <property type="match status" value="1"/>
</dbReference>
<dbReference type="InterPro" id="IPR044856">
    <property type="entry name" value="Malate_synth_C_sf"/>
</dbReference>
<dbReference type="InterPro" id="IPR011076">
    <property type="entry name" value="Malate_synth_sf"/>
</dbReference>
<dbReference type="InterPro" id="IPR001465">
    <property type="entry name" value="Malate_synthase_TIM"/>
</dbReference>
<dbReference type="InterPro" id="IPR006253">
    <property type="entry name" value="Malate_synthG"/>
</dbReference>
<dbReference type="InterPro" id="IPR048355">
    <property type="entry name" value="MS_C"/>
</dbReference>
<dbReference type="InterPro" id="IPR048356">
    <property type="entry name" value="MS_N"/>
</dbReference>
<dbReference type="InterPro" id="IPR046363">
    <property type="entry name" value="MS_N_TIM-barrel_dom"/>
</dbReference>
<dbReference type="InterPro" id="IPR048357">
    <property type="entry name" value="MSG_insertion"/>
</dbReference>
<dbReference type="NCBIfam" id="TIGR01345">
    <property type="entry name" value="malate_syn_G"/>
    <property type="match status" value="1"/>
</dbReference>
<dbReference type="NCBIfam" id="NF002825">
    <property type="entry name" value="PRK02999.1"/>
    <property type="match status" value="1"/>
</dbReference>
<dbReference type="PANTHER" id="PTHR42739">
    <property type="entry name" value="MALATE SYNTHASE G"/>
    <property type="match status" value="1"/>
</dbReference>
<dbReference type="PANTHER" id="PTHR42739:SF1">
    <property type="entry name" value="MALATE SYNTHASE G"/>
    <property type="match status" value="1"/>
</dbReference>
<dbReference type="Pfam" id="PF20659">
    <property type="entry name" value="MS_C"/>
    <property type="match status" value="1"/>
</dbReference>
<dbReference type="Pfam" id="PF20656">
    <property type="entry name" value="MS_N"/>
    <property type="match status" value="1"/>
</dbReference>
<dbReference type="Pfam" id="PF01274">
    <property type="entry name" value="MS_TIM-barrel"/>
    <property type="match status" value="1"/>
</dbReference>
<dbReference type="Pfam" id="PF20658">
    <property type="entry name" value="MSG_insertion"/>
    <property type="match status" value="1"/>
</dbReference>
<dbReference type="SUPFAM" id="SSF51645">
    <property type="entry name" value="Malate synthase G"/>
    <property type="match status" value="1"/>
</dbReference>
<reference key="1">
    <citation type="journal article" date="2008" name="Genome Res.">
        <title>Insights from the complete genome sequence of Mycobacterium marinum on the evolution of Mycobacterium tuberculosis.</title>
        <authorList>
            <person name="Stinear T.P."/>
            <person name="Seemann T."/>
            <person name="Harrison P.F."/>
            <person name="Jenkin G.A."/>
            <person name="Davies J.K."/>
            <person name="Johnson P.D."/>
            <person name="Abdellah Z."/>
            <person name="Arrowsmith C."/>
            <person name="Chillingworth T."/>
            <person name="Churcher C."/>
            <person name="Clarke K."/>
            <person name="Cronin A."/>
            <person name="Davis P."/>
            <person name="Goodhead I."/>
            <person name="Holroyd N."/>
            <person name="Jagels K."/>
            <person name="Lord A."/>
            <person name="Moule S."/>
            <person name="Mungall K."/>
            <person name="Norbertczak H."/>
            <person name="Quail M.A."/>
            <person name="Rabbinowitsch E."/>
            <person name="Walker D."/>
            <person name="White B."/>
            <person name="Whitehead S."/>
            <person name="Small P.L."/>
            <person name="Brosch R."/>
            <person name="Ramakrishnan L."/>
            <person name="Fischbach M.A."/>
            <person name="Parkhill J."/>
            <person name="Cole S.T."/>
        </authorList>
    </citation>
    <scope>NUCLEOTIDE SEQUENCE [LARGE SCALE GENOMIC DNA]</scope>
    <source>
        <strain>ATCC BAA-535 / M</strain>
    </source>
</reference>
<proteinExistence type="evidence at protein level"/>
<protein>
    <recommendedName>
        <fullName evidence="1">Malate synthase G</fullName>
        <ecNumber evidence="1">2.3.3.9</ecNumber>
    </recommendedName>
</protein>
<organism>
    <name type="scientific">Mycobacterium marinum (strain ATCC BAA-535 / M)</name>
    <dbReference type="NCBI Taxonomy" id="216594"/>
    <lineage>
        <taxon>Bacteria</taxon>
        <taxon>Bacillati</taxon>
        <taxon>Actinomycetota</taxon>
        <taxon>Actinomycetes</taxon>
        <taxon>Mycobacteriales</taxon>
        <taxon>Mycobacteriaceae</taxon>
        <taxon>Mycobacterium</taxon>
        <taxon>Mycobacterium ulcerans group</taxon>
    </lineage>
</organism>